<sequence length="61" mass="6642">MDTKLLDILACPITKGPLKLSADKTELISKGAGLAYPIRDGIPVMLESEARTLTDDERLDK</sequence>
<organism>
    <name type="scientific">Pseudomonas putida (strain W619)</name>
    <dbReference type="NCBI Taxonomy" id="390235"/>
    <lineage>
        <taxon>Bacteria</taxon>
        <taxon>Pseudomonadati</taxon>
        <taxon>Pseudomonadota</taxon>
        <taxon>Gammaproteobacteria</taxon>
        <taxon>Pseudomonadales</taxon>
        <taxon>Pseudomonadaceae</taxon>
        <taxon>Pseudomonas</taxon>
    </lineage>
</organism>
<reference key="1">
    <citation type="submission" date="2008-02" db="EMBL/GenBank/DDBJ databases">
        <title>Complete sequence of Pseudomonas putida W619.</title>
        <authorList>
            <person name="Copeland A."/>
            <person name="Lucas S."/>
            <person name="Lapidus A."/>
            <person name="Barry K."/>
            <person name="Detter J.C."/>
            <person name="Glavina del Rio T."/>
            <person name="Dalin E."/>
            <person name="Tice H."/>
            <person name="Pitluck S."/>
            <person name="Chain P."/>
            <person name="Malfatti S."/>
            <person name="Shin M."/>
            <person name="Vergez L."/>
            <person name="Schmutz J."/>
            <person name="Larimer F."/>
            <person name="Land M."/>
            <person name="Hauser L."/>
            <person name="Kyrpides N."/>
            <person name="Kim E."/>
            <person name="Taghavi S."/>
            <person name="Vangronsveld D."/>
            <person name="van der Lelie D."/>
            <person name="Richardson P."/>
        </authorList>
    </citation>
    <scope>NUCLEOTIDE SEQUENCE [LARGE SCALE GENOMIC DNA]</scope>
    <source>
        <strain>W619</strain>
    </source>
</reference>
<protein>
    <recommendedName>
        <fullName evidence="1">UPF0434 protein PputW619_1512</fullName>
    </recommendedName>
</protein>
<feature type="chain" id="PRO_1000138322" description="UPF0434 protein PputW619_1512">
    <location>
        <begin position="1"/>
        <end position="61"/>
    </location>
</feature>
<evidence type="ECO:0000255" key="1">
    <source>
        <dbReference type="HAMAP-Rule" id="MF_01187"/>
    </source>
</evidence>
<dbReference type="EMBL" id="CP000949">
    <property type="protein sequence ID" value="ACA72017.1"/>
    <property type="molecule type" value="Genomic_DNA"/>
</dbReference>
<dbReference type="SMR" id="B1J507"/>
<dbReference type="STRING" id="390235.PputW619_1512"/>
<dbReference type="KEGG" id="ppw:PputW619_1512"/>
<dbReference type="eggNOG" id="COG2835">
    <property type="taxonomic scope" value="Bacteria"/>
</dbReference>
<dbReference type="HOGENOM" id="CLU_155659_3_1_6"/>
<dbReference type="OrthoDB" id="9812205at2"/>
<dbReference type="GO" id="GO:0005829">
    <property type="term" value="C:cytosol"/>
    <property type="evidence" value="ECO:0007669"/>
    <property type="project" value="TreeGrafter"/>
</dbReference>
<dbReference type="FunFam" id="2.20.25.10:FF:000002">
    <property type="entry name" value="UPF0434 protein YcaR"/>
    <property type="match status" value="1"/>
</dbReference>
<dbReference type="Gene3D" id="2.20.25.10">
    <property type="match status" value="1"/>
</dbReference>
<dbReference type="HAMAP" id="MF_01187">
    <property type="entry name" value="UPF0434"/>
    <property type="match status" value="1"/>
</dbReference>
<dbReference type="InterPro" id="IPR005651">
    <property type="entry name" value="Trm112-like"/>
</dbReference>
<dbReference type="PANTHER" id="PTHR33505:SF4">
    <property type="entry name" value="PROTEIN PREY, MITOCHONDRIAL"/>
    <property type="match status" value="1"/>
</dbReference>
<dbReference type="PANTHER" id="PTHR33505">
    <property type="entry name" value="ZGC:162634"/>
    <property type="match status" value="1"/>
</dbReference>
<dbReference type="Pfam" id="PF03966">
    <property type="entry name" value="Trm112p"/>
    <property type="match status" value="1"/>
</dbReference>
<dbReference type="SUPFAM" id="SSF158997">
    <property type="entry name" value="Trm112p-like"/>
    <property type="match status" value="1"/>
</dbReference>
<name>Y1512_PSEPW</name>
<comment type="similarity">
    <text evidence="1">Belongs to the UPF0434 family.</text>
</comment>
<proteinExistence type="inferred from homology"/>
<accession>B1J507</accession>
<gene>
    <name type="ordered locus">PputW619_1512</name>
</gene>